<dbReference type="EC" id="3.4.-.-"/>
<dbReference type="EMBL" id="L77117">
    <property type="protein sequence ID" value="AAB98071.1"/>
    <property type="molecule type" value="Genomic_DNA"/>
</dbReference>
<dbReference type="PIR" id="B64311">
    <property type="entry name" value="B64311"/>
</dbReference>
<dbReference type="FunCoup" id="Q57555">
    <property type="interactions" value="1"/>
</dbReference>
<dbReference type="STRING" id="243232.MJ_0090"/>
<dbReference type="PaxDb" id="243232-MJ_0090"/>
<dbReference type="DNASU" id="1450929"/>
<dbReference type="EnsemblBacteria" id="AAB98071">
    <property type="protein sequence ID" value="AAB98071"/>
    <property type="gene ID" value="MJ_0090"/>
</dbReference>
<dbReference type="KEGG" id="mja:MJ_0090"/>
<dbReference type="eggNOG" id="arCOG03202">
    <property type="taxonomic scope" value="Archaea"/>
</dbReference>
<dbReference type="HOGENOM" id="CLU_011540_0_1_2"/>
<dbReference type="InParanoid" id="Q57555"/>
<dbReference type="PhylomeDB" id="Q57555"/>
<dbReference type="Proteomes" id="UP000000805">
    <property type="component" value="Chromosome"/>
</dbReference>
<dbReference type="GO" id="GO:0008233">
    <property type="term" value="F:peptidase activity"/>
    <property type="evidence" value="ECO:0007669"/>
    <property type="project" value="UniProtKB-KW"/>
</dbReference>
<dbReference type="GO" id="GO:0009058">
    <property type="term" value="P:biosynthetic process"/>
    <property type="evidence" value="ECO:0007669"/>
    <property type="project" value="UniProtKB-ARBA"/>
</dbReference>
<dbReference type="GO" id="GO:0006508">
    <property type="term" value="P:proteolysis"/>
    <property type="evidence" value="ECO:0007669"/>
    <property type="project" value="UniProtKB-KW"/>
</dbReference>
<dbReference type="Gene3D" id="2.40.30.10">
    <property type="entry name" value="Translation factors"/>
    <property type="match status" value="1"/>
</dbReference>
<dbReference type="InterPro" id="IPR001539">
    <property type="entry name" value="Peptidase_U32"/>
</dbReference>
<dbReference type="InterPro" id="IPR051454">
    <property type="entry name" value="RNA/ubiquinone_mod_enzymes"/>
</dbReference>
<dbReference type="InterPro" id="IPR009000">
    <property type="entry name" value="Transl_B-barrel_sf"/>
</dbReference>
<dbReference type="PANTHER" id="PTHR30217">
    <property type="entry name" value="PEPTIDASE U32 FAMILY"/>
    <property type="match status" value="1"/>
</dbReference>
<dbReference type="PANTHER" id="PTHR30217:SF6">
    <property type="entry name" value="TRNA HYDROXYLATION PROTEIN P"/>
    <property type="match status" value="1"/>
</dbReference>
<dbReference type="Pfam" id="PF01136">
    <property type="entry name" value="Peptidase_U32"/>
    <property type="match status" value="1"/>
</dbReference>
<dbReference type="SUPFAM" id="SSF50447">
    <property type="entry name" value="Translation proteins"/>
    <property type="match status" value="1"/>
</dbReference>
<dbReference type="PROSITE" id="PS01276">
    <property type="entry name" value="PEPTIDASE_U32"/>
    <property type="match status" value="1"/>
</dbReference>
<reference key="1">
    <citation type="journal article" date="1996" name="Science">
        <title>Complete genome sequence of the methanogenic archaeon, Methanococcus jannaschii.</title>
        <authorList>
            <person name="Bult C.J."/>
            <person name="White O."/>
            <person name="Olsen G.J."/>
            <person name="Zhou L."/>
            <person name="Fleischmann R.D."/>
            <person name="Sutton G.G."/>
            <person name="Blake J.A."/>
            <person name="FitzGerald L.M."/>
            <person name="Clayton R.A."/>
            <person name="Gocayne J.D."/>
            <person name="Kerlavage A.R."/>
            <person name="Dougherty B.A."/>
            <person name="Tomb J.-F."/>
            <person name="Adams M.D."/>
            <person name="Reich C.I."/>
            <person name="Overbeek R."/>
            <person name="Kirkness E.F."/>
            <person name="Weinstock K.G."/>
            <person name="Merrick J.M."/>
            <person name="Glodek A."/>
            <person name="Scott J.L."/>
            <person name="Geoghagen N.S.M."/>
            <person name="Weidman J.F."/>
            <person name="Fuhrmann J.L."/>
            <person name="Nguyen D."/>
            <person name="Utterback T.R."/>
            <person name="Kelley J.M."/>
            <person name="Peterson J.D."/>
            <person name="Sadow P.W."/>
            <person name="Hanna M.C."/>
            <person name="Cotton M.D."/>
            <person name="Roberts K.M."/>
            <person name="Hurst M.A."/>
            <person name="Kaine B.P."/>
            <person name="Borodovsky M."/>
            <person name="Klenk H.-P."/>
            <person name="Fraser C.M."/>
            <person name="Smith H.O."/>
            <person name="Woese C.R."/>
            <person name="Venter J.C."/>
        </authorList>
    </citation>
    <scope>NUCLEOTIDE SEQUENCE [LARGE SCALE GENOMIC DNA]</scope>
    <source>
        <strain>ATCC 43067 / DSM 2661 / JAL-1 / JCM 10045 / NBRC 100440</strain>
    </source>
</reference>
<comment type="similarity">
    <text evidence="1">Belongs to the peptidase U32 family.</text>
</comment>
<accession>Q57555</accession>
<sequence>MMVMVELLSPANDLTCLKTAIDYGADAVYCGLKELNMRANAKNFTREELIEGIKYAHDNNKKVYLCTNTVVYENDLKKVEEILDFANSAEVDAVIVSDLGTMQLANELGLRVHASVQCNVTNSLTAKFYSKFAKRVILSRELTLNQIKEIRENLKKDKVDLELEGFVHGALCVAISGRCFLSSYLFGRHANCGDCLQPCRRKWKLINEHHDGTYEIVCEGKYLLSPKDLCMIEHIPELMEVFDSFKIEGRAKNADYVMRTTKIYREAIDSVLDGSYYDKLEYFKKELQKVYNRSYDTGFYFRDINKNHDFQYEIEGNASKYRKIEIGRVVNFYKKVSVAEIELWHDLKIGDTILIIGKTTGCVEEVVKSMQINHKDVEIAKKGERVGVKLNHLVREGDRVYLLKETI</sequence>
<proteinExistence type="inferred from homology"/>
<keyword id="KW-0378">Hydrolase</keyword>
<keyword id="KW-0645">Protease</keyword>
<keyword id="KW-1185">Reference proteome</keyword>
<evidence type="ECO:0000305" key="1"/>
<gene>
    <name type="ordered locus">MJ0090</name>
</gene>
<protein>
    <recommendedName>
        <fullName>Uncharacterized protease MJ0090</fullName>
        <ecNumber>3.4.-.-</ecNumber>
    </recommendedName>
</protein>
<name>Y090_METJA</name>
<feature type="chain" id="PRO_0000079186" description="Uncharacterized protease MJ0090">
    <location>
        <begin position="1"/>
        <end position="407"/>
    </location>
</feature>
<organism>
    <name type="scientific">Methanocaldococcus jannaschii (strain ATCC 43067 / DSM 2661 / JAL-1 / JCM 10045 / NBRC 100440)</name>
    <name type="common">Methanococcus jannaschii</name>
    <dbReference type="NCBI Taxonomy" id="243232"/>
    <lineage>
        <taxon>Archaea</taxon>
        <taxon>Methanobacteriati</taxon>
        <taxon>Methanobacteriota</taxon>
        <taxon>Methanomada group</taxon>
        <taxon>Methanococci</taxon>
        <taxon>Methanococcales</taxon>
        <taxon>Methanocaldococcaceae</taxon>
        <taxon>Methanocaldococcus</taxon>
    </lineage>
</organism>